<reference key="1">
    <citation type="journal article" date="2008" name="Appl. Environ. Microbiol.">
        <title>Genome of the epsilonproteobacterial chemolithoautotroph Sulfurimonas denitrificans.</title>
        <authorList>
            <person name="Sievert S.M."/>
            <person name="Scott K.M."/>
            <person name="Klotz M.G."/>
            <person name="Chain P.S.G."/>
            <person name="Hauser L.J."/>
            <person name="Hemp J."/>
            <person name="Huegler M."/>
            <person name="Land M."/>
            <person name="Lapidus A."/>
            <person name="Larimer F.W."/>
            <person name="Lucas S."/>
            <person name="Malfatti S.A."/>
            <person name="Meyer F."/>
            <person name="Paulsen I.T."/>
            <person name="Ren Q."/>
            <person name="Simon J."/>
            <person name="Bailey K."/>
            <person name="Diaz E."/>
            <person name="Fitzpatrick K.A."/>
            <person name="Glover B."/>
            <person name="Gwatney N."/>
            <person name="Korajkic A."/>
            <person name="Long A."/>
            <person name="Mobberley J.M."/>
            <person name="Pantry S.N."/>
            <person name="Pazder G."/>
            <person name="Peterson S."/>
            <person name="Quintanilla J.D."/>
            <person name="Sprinkle R."/>
            <person name="Stephens J."/>
            <person name="Thomas P."/>
            <person name="Vaughn R."/>
            <person name="Weber M.J."/>
            <person name="Wooten L.L."/>
        </authorList>
    </citation>
    <scope>NUCLEOTIDE SEQUENCE [LARGE SCALE GENOMIC DNA]</scope>
    <source>
        <strain>ATCC 33889 / DSM 1251</strain>
    </source>
</reference>
<dbReference type="EC" id="1.7.1.13" evidence="1"/>
<dbReference type="EMBL" id="CP000153">
    <property type="protein sequence ID" value="ABB43285.1"/>
    <property type="molecule type" value="Genomic_DNA"/>
</dbReference>
<dbReference type="RefSeq" id="WP_011371640.1">
    <property type="nucleotide sequence ID" value="NC_007575.1"/>
</dbReference>
<dbReference type="SMR" id="Q30UP6"/>
<dbReference type="STRING" id="326298.Suden_0004"/>
<dbReference type="KEGG" id="tdn:Suden_0004"/>
<dbReference type="eggNOG" id="COG0780">
    <property type="taxonomic scope" value="Bacteria"/>
</dbReference>
<dbReference type="HOGENOM" id="CLU_102489_1_1_7"/>
<dbReference type="OrthoDB" id="9789995at2"/>
<dbReference type="UniPathway" id="UPA00392"/>
<dbReference type="Proteomes" id="UP000002714">
    <property type="component" value="Chromosome"/>
</dbReference>
<dbReference type="GO" id="GO:0005737">
    <property type="term" value="C:cytoplasm"/>
    <property type="evidence" value="ECO:0007669"/>
    <property type="project" value="UniProtKB-SubCell"/>
</dbReference>
<dbReference type="GO" id="GO:0033739">
    <property type="term" value="F:preQ1 synthase activity"/>
    <property type="evidence" value="ECO:0007669"/>
    <property type="project" value="UniProtKB-UniRule"/>
</dbReference>
<dbReference type="GO" id="GO:0008616">
    <property type="term" value="P:queuosine biosynthetic process"/>
    <property type="evidence" value="ECO:0007669"/>
    <property type="project" value="UniProtKB-UniRule"/>
</dbReference>
<dbReference type="GO" id="GO:0006400">
    <property type="term" value="P:tRNA modification"/>
    <property type="evidence" value="ECO:0007669"/>
    <property type="project" value="UniProtKB-UniRule"/>
</dbReference>
<dbReference type="Gene3D" id="3.30.1130.10">
    <property type="match status" value="1"/>
</dbReference>
<dbReference type="HAMAP" id="MF_00818">
    <property type="entry name" value="QueF_type1"/>
    <property type="match status" value="1"/>
</dbReference>
<dbReference type="InterPro" id="IPR043133">
    <property type="entry name" value="GTP-CH-I_C/QueF"/>
</dbReference>
<dbReference type="InterPro" id="IPR050084">
    <property type="entry name" value="NADPH_dep_7-cyano-7-deazaG_red"/>
</dbReference>
<dbReference type="InterPro" id="IPR029500">
    <property type="entry name" value="QueF"/>
</dbReference>
<dbReference type="InterPro" id="IPR016856">
    <property type="entry name" value="QueF_type1"/>
</dbReference>
<dbReference type="NCBIfam" id="TIGR03139">
    <property type="entry name" value="QueF-II"/>
    <property type="match status" value="1"/>
</dbReference>
<dbReference type="PANTHER" id="PTHR34354">
    <property type="entry name" value="NADPH-DEPENDENT 7-CYANO-7-DEAZAGUANINE REDUCTASE"/>
    <property type="match status" value="1"/>
</dbReference>
<dbReference type="PANTHER" id="PTHR34354:SF1">
    <property type="entry name" value="NADPH-DEPENDENT 7-CYANO-7-DEAZAGUANINE REDUCTASE"/>
    <property type="match status" value="1"/>
</dbReference>
<dbReference type="Pfam" id="PF14489">
    <property type="entry name" value="QueF"/>
    <property type="match status" value="1"/>
</dbReference>
<dbReference type="PIRSF" id="PIRSF027377">
    <property type="entry name" value="Nitrile_oxidored_QueF"/>
    <property type="match status" value="1"/>
</dbReference>
<dbReference type="SUPFAM" id="SSF55620">
    <property type="entry name" value="Tetrahydrobiopterin biosynthesis enzymes-like"/>
    <property type="match status" value="1"/>
</dbReference>
<evidence type="ECO:0000255" key="1">
    <source>
        <dbReference type="HAMAP-Rule" id="MF_00818"/>
    </source>
</evidence>
<sequence>MKYGEKIVSEFDVEKDLEIWPNEHKRDYLIKMTLPEFSCLCPRSGYPDYATIYLEYTPNERVVELKAIKLYINSFRDRHISHENSANEIYTVLERKLKPKYMKIVADYNPRGNVHTVIEIDSSKL</sequence>
<proteinExistence type="inferred from homology"/>
<name>QUEF_SULDN</name>
<comment type="function">
    <text evidence="1">Catalyzes the NADPH-dependent reduction of 7-cyano-7-deazaguanine (preQ0) to 7-aminomethyl-7-deazaguanine (preQ1).</text>
</comment>
<comment type="catalytic activity">
    <reaction evidence="1">
        <text>7-aminomethyl-7-carbaguanine + 2 NADP(+) = 7-cyano-7-deazaguanine + 2 NADPH + 3 H(+)</text>
        <dbReference type="Rhea" id="RHEA:13409"/>
        <dbReference type="ChEBI" id="CHEBI:15378"/>
        <dbReference type="ChEBI" id="CHEBI:45075"/>
        <dbReference type="ChEBI" id="CHEBI:57783"/>
        <dbReference type="ChEBI" id="CHEBI:58349"/>
        <dbReference type="ChEBI" id="CHEBI:58703"/>
        <dbReference type="EC" id="1.7.1.13"/>
    </reaction>
</comment>
<comment type="pathway">
    <text evidence="1">tRNA modification; tRNA-queuosine biosynthesis.</text>
</comment>
<comment type="subcellular location">
    <subcellularLocation>
        <location evidence="1">Cytoplasm</location>
    </subcellularLocation>
</comment>
<comment type="similarity">
    <text evidence="1">Belongs to the GTP cyclohydrolase I family. QueF type 1 subfamily.</text>
</comment>
<gene>
    <name evidence="1" type="primary">queF</name>
    <name type="ordered locus">Suden_0004</name>
</gene>
<keyword id="KW-0963">Cytoplasm</keyword>
<keyword id="KW-0521">NADP</keyword>
<keyword id="KW-0560">Oxidoreductase</keyword>
<keyword id="KW-0671">Queuosine biosynthesis</keyword>
<keyword id="KW-1185">Reference proteome</keyword>
<feature type="chain" id="PRO_0000247701" description="NADPH-dependent 7-cyano-7-deazaguanine reductase">
    <location>
        <begin position="1"/>
        <end position="125"/>
    </location>
</feature>
<feature type="active site" description="Thioimide intermediate" evidence="1">
    <location>
        <position position="41"/>
    </location>
</feature>
<feature type="active site" description="Proton donor" evidence="1">
    <location>
        <position position="48"/>
    </location>
</feature>
<feature type="binding site" evidence="1">
    <location>
        <begin position="63"/>
        <end position="65"/>
    </location>
    <ligand>
        <name>substrate</name>
    </ligand>
</feature>
<feature type="binding site" evidence="1">
    <location>
        <begin position="82"/>
        <end position="83"/>
    </location>
    <ligand>
        <name>substrate</name>
    </ligand>
</feature>
<accession>Q30UP6</accession>
<organism>
    <name type="scientific">Sulfurimonas denitrificans (strain ATCC 33889 / DSM 1251)</name>
    <name type="common">Thiomicrospira denitrificans (strain ATCC 33889 / DSM 1251)</name>
    <dbReference type="NCBI Taxonomy" id="326298"/>
    <lineage>
        <taxon>Bacteria</taxon>
        <taxon>Pseudomonadati</taxon>
        <taxon>Campylobacterota</taxon>
        <taxon>Epsilonproteobacteria</taxon>
        <taxon>Campylobacterales</taxon>
        <taxon>Sulfurimonadaceae</taxon>
        <taxon>Sulfurimonas</taxon>
    </lineage>
</organism>
<protein>
    <recommendedName>
        <fullName evidence="1">NADPH-dependent 7-cyano-7-deazaguanine reductase</fullName>
        <ecNumber evidence="1">1.7.1.13</ecNumber>
    </recommendedName>
    <alternativeName>
        <fullName evidence="1">7-cyano-7-carbaguanine reductase</fullName>
    </alternativeName>
    <alternativeName>
        <fullName evidence="1">NADPH-dependent nitrile oxidoreductase</fullName>
    </alternativeName>
    <alternativeName>
        <fullName evidence="1">PreQ(0) reductase</fullName>
    </alternativeName>
</protein>